<name>Y8605_DICDI</name>
<keyword id="KW-0175">Coiled coil</keyword>
<keyword id="KW-1185">Reference proteome</keyword>
<dbReference type="EMBL" id="AAFI02000064">
    <property type="protein sequence ID" value="EAL65278.1"/>
    <property type="molecule type" value="Genomic_DNA"/>
</dbReference>
<dbReference type="RefSeq" id="XP_638628.1">
    <property type="nucleotide sequence ID" value="XM_633536.1"/>
</dbReference>
<dbReference type="SMR" id="Q54PM6"/>
<dbReference type="FunCoup" id="Q54PM6">
    <property type="interactions" value="877"/>
</dbReference>
<dbReference type="STRING" id="44689.Q54PM6"/>
<dbReference type="GlyGen" id="Q54PM6">
    <property type="glycosylation" value="1 site"/>
</dbReference>
<dbReference type="PaxDb" id="44689-DDB0218605"/>
<dbReference type="EnsemblProtists" id="EAL65278">
    <property type="protein sequence ID" value="EAL65278"/>
    <property type="gene ID" value="DDB_G0284459"/>
</dbReference>
<dbReference type="GeneID" id="8624599"/>
<dbReference type="KEGG" id="ddi:DDB_G0284459"/>
<dbReference type="dictyBase" id="DDB_G0284459"/>
<dbReference type="VEuPathDB" id="AmoebaDB:DDB_G0284459"/>
<dbReference type="eggNOG" id="KOG0835">
    <property type="taxonomic scope" value="Eukaryota"/>
</dbReference>
<dbReference type="HOGENOM" id="CLU_268378_0_0_1"/>
<dbReference type="InParanoid" id="Q54PM6"/>
<dbReference type="OMA" id="CLEMYLQ"/>
<dbReference type="PRO" id="PR:Q54PM6"/>
<dbReference type="Proteomes" id="UP000002195">
    <property type="component" value="Chromosome 4"/>
</dbReference>
<dbReference type="PANTHER" id="PTHR23202:SF124">
    <property type="entry name" value="C2H2-TYPE DOMAIN-CONTAINING PROTEIN-RELATED"/>
    <property type="match status" value="1"/>
</dbReference>
<dbReference type="PANTHER" id="PTHR23202">
    <property type="entry name" value="WASP INTERACTING PROTEIN-RELATED"/>
    <property type="match status" value="1"/>
</dbReference>
<organism>
    <name type="scientific">Dictyostelium discoideum</name>
    <name type="common">Social amoeba</name>
    <dbReference type="NCBI Taxonomy" id="44689"/>
    <lineage>
        <taxon>Eukaryota</taxon>
        <taxon>Amoebozoa</taxon>
        <taxon>Evosea</taxon>
        <taxon>Eumycetozoa</taxon>
        <taxon>Dictyostelia</taxon>
        <taxon>Dictyosteliales</taxon>
        <taxon>Dictyosteliaceae</taxon>
        <taxon>Dictyostelium</taxon>
    </lineage>
</organism>
<gene>
    <name type="ORF">DDB_G0284459</name>
</gene>
<evidence type="ECO:0000255" key="1"/>
<evidence type="ECO:0000256" key="2">
    <source>
        <dbReference type="SAM" id="MobiDB-lite"/>
    </source>
</evidence>
<feature type="chain" id="PRO_0000350917" description="Uncharacterized protein DDB_G0284459">
    <location>
        <begin position="1"/>
        <end position="1224"/>
    </location>
</feature>
<feature type="region of interest" description="Disordered" evidence="2">
    <location>
        <begin position="1"/>
        <end position="67"/>
    </location>
</feature>
<feature type="region of interest" description="Disordered" evidence="2">
    <location>
        <begin position="111"/>
        <end position="151"/>
    </location>
</feature>
<feature type="region of interest" description="Disordered" evidence="2">
    <location>
        <begin position="193"/>
        <end position="270"/>
    </location>
</feature>
<feature type="region of interest" description="Disordered" evidence="2">
    <location>
        <begin position="316"/>
        <end position="416"/>
    </location>
</feature>
<feature type="region of interest" description="Disordered" evidence="2">
    <location>
        <begin position="430"/>
        <end position="957"/>
    </location>
</feature>
<feature type="region of interest" description="Disordered" evidence="2">
    <location>
        <begin position="1078"/>
        <end position="1167"/>
    </location>
</feature>
<feature type="coiled-coil region" evidence="1">
    <location>
        <begin position="950"/>
        <end position="991"/>
    </location>
</feature>
<feature type="compositionally biased region" description="Low complexity" evidence="2">
    <location>
        <begin position="10"/>
        <end position="48"/>
    </location>
</feature>
<feature type="compositionally biased region" description="Acidic residues" evidence="2">
    <location>
        <begin position="49"/>
        <end position="58"/>
    </location>
</feature>
<feature type="compositionally biased region" description="Low complexity" evidence="2">
    <location>
        <begin position="126"/>
        <end position="140"/>
    </location>
</feature>
<feature type="compositionally biased region" description="Low complexity" evidence="2">
    <location>
        <begin position="193"/>
        <end position="212"/>
    </location>
</feature>
<feature type="compositionally biased region" description="Low complexity" evidence="2">
    <location>
        <begin position="228"/>
        <end position="241"/>
    </location>
</feature>
<feature type="compositionally biased region" description="Polar residues" evidence="2">
    <location>
        <begin position="242"/>
        <end position="255"/>
    </location>
</feature>
<feature type="compositionally biased region" description="Basic and acidic residues" evidence="2">
    <location>
        <begin position="260"/>
        <end position="270"/>
    </location>
</feature>
<feature type="compositionally biased region" description="Low complexity" evidence="2">
    <location>
        <begin position="316"/>
        <end position="338"/>
    </location>
</feature>
<feature type="compositionally biased region" description="Polar residues" evidence="2">
    <location>
        <begin position="341"/>
        <end position="353"/>
    </location>
</feature>
<feature type="compositionally biased region" description="Low complexity" evidence="2">
    <location>
        <begin position="379"/>
        <end position="413"/>
    </location>
</feature>
<feature type="compositionally biased region" description="Low complexity" evidence="2">
    <location>
        <begin position="430"/>
        <end position="450"/>
    </location>
</feature>
<feature type="compositionally biased region" description="Basic and acidic residues" evidence="2">
    <location>
        <begin position="451"/>
        <end position="585"/>
    </location>
</feature>
<feature type="compositionally biased region" description="Basic and acidic residues" evidence="2">
    <location>
        <begin position="630"/>
        <end position="646"/>
    </location>
</feature>
<feature type="compositionally biased region" description="Low complexity" evidence="2">
    <location>
        <begin position="662"/>
        <end position="719"/>
    </location>
</feature>
<feature type="compositionally biased region" description="Pro residues" evidence="2">
    <location>
        <begin position="727"/>
        <end position="750"/>
    </location>
</feature>
<feature type="compositionally biased region" description="Basic and acidic residues" evidence="2">
    <location>
        <begin position="755"/>
        <end position="892"/>
    </location>
</feature>
<feature type="compositionally biased region" description="Low complexity" evidence="2">
    <location>
        <begin position="893"/>
        <end position="933"/>
    </location>
</feature>
<feature type="compositionally biased region" description="Basic and acidic residues" evidence="2">
    <location>
        <begin position="948"/>
        <end position="957"/>
    </location>
</feature>
<feature type="compositionally biased region" description="Low complexity" evidence="2">
    <location>
        <begin position="1078"/>
        <end position="1108"/>
    </location>
</feature>
<feature type="compositionally biased region" description="Low complexity" evidence="2">
    <location>
        <begin position="1114"/>
        <end position="1165"/>
    </location>
</feature>
<protein>
    <recommendedName>
        <fullName>Uncharacterized protein DDB_G0284459</fullName>
    </recommendedName>
</protein>
<proteinExistence type="predicted"/>
<sequence length="1224" mass="136421">MNQDFEHQLSFHSNNNSNSNHHHSYNNSINSGSSSSGSNNSSNNNSFNDEIEGGEIQEEPYISSSSIRTSELDQKILFLSKDRNLSKRTGSEDPQYGSFFNTLSEPLILSQQSHQQHKKQNRDQHSSSSSSSSSSSSSSSRSKRSNQPPPLVGIAAINQQQQHLQKQKQQLQQQQIQIQLQKQQLQQQIVQHQTELQNKSTPSKTSSASSPPQNTLSAPAPPAPAPTSAPTSAPTSSSVSSLTQPQKPKSVQYSQPAPLEIREEKVDPNIKEEFENTESKISSIIQSMICPISPLRSPFNESIVYTNISSSSSDFDYNNSNSNNSNNNNNNNNSITENNTDKMINNQPSSTNSKKLKTNEIDSKDTSNNNLNGADFKKTTTTTTTTTTSSTSEPIKSPNSSSSTNSSASTTPTVKKEKLILKIPKLVVKSDSGTNKESNSSNSSSTTSTPKSKDLEEKKEKEKSEKEKGEKLEKSEKSDKSEKTEKTEKAEKTEKSEKSEKSEKTDQLEKAEKLEKEEKTEKKKTEKVEKAGKVEKKEKPKDKQTKQEKEKEKEKEKETEKEKEKKDKVSSKKDELQPIEEDKKKIGGKRKSINSSKPEFKSDSIDMDIDEPNPKSSSNYNDSDDDSENEIDKSDKRSQKKSKVESPPKSSKLSNGKDKKSTTTTTTSTSSSSSLPSLSSSSSSLPLPSSSSSSSSSSSSSSSSSSSSSSSSSSSTTSTKIKKEEPPPPPPQQPPPPPPQQPPPPPPPINPFSVSEHDKKIIEKETGKDLGSSRDRDNSSRTTNGRDSDRDRDSREGSRDRDRDRDRDRDRDRDRDRDRGRDRGNGDRGEGDRDRDRSGRSDRDRDRDRDRDRDRDRDRDRGNDRDRDRDRDRDRDRGRDRGSDRDRDRKDSNSNNNSNNNNNNNNNNNNNNNNNNNNKKDNNNNNNNNNNNNNKRDGNKDGSSSELTPKKTKQEEKLIRSQIDQIKEDAKDLKKLAKELQSKNQNECLEMYLQVGLKYLLTTHYMIEVNDPLPNIISFLSEISLFFSNTSRLALHFKDDPKASLCFKCESFCCIKMFCLKKDNLKHTRKEVSSVYSSFLPNSSSSSKSSSSSSSSSNQPANPATAPLTPNPGNPSESPSQASSSSNPTSTTPSATTTTTTTATTTPSTTATTTTTSNNNQPNTSHVNTKIAQYFKDTEDIFRGMDAWEKSILHSNIPGFHFNFFYQPYLEFIDQVKKESDKQS</sequence>
<reference key="1">
    <citation type="journal article" date="2005" name="Nature">
        <title>The genome of the social amoeba Dictyostelium discoideum.</title>
        <authorList>
            <person name="Eichinger L."/>
            <person name="Pachebat J.A."/>
            <person name="Gloeckner G."/>
            <person name="Rajandream M.A."/>
            <person name="Sucgang R."/>
            <person name="Berriman M."/>
            <person name="Song J."/>
            <person name="Olsen R."/>
            <person name="Szafranski K."/>
            <person name="Xu Q."/>
            <person name="Tunggal B."/>
            <person name="Kummerfeld S."/>
            <person name="Madera M."/>
            <person name="Konfortov B.A."/>
            <person name="Rivero F."/>
            <person name="Bankier A.T."/>
            <person name="Lehmann R."/>
            <person name="Hamlin N."/>
            <person name="Davies R."/>
            <person name="Gaudet P."/>
            <person name="Fey P."/>
            <person name="Pilcher K."/>
            <person name="Chen G."/>
            <person name="Saunders D."/>
            <person name="Sodergren E.J."/>
            <person name="Davis P."/>
            <person name="Kerhornou A."/>
            <person name="Nie X."/>
            <person name="Hall N."/>
            <person name="Anjard C."/>
            <person name="Hemphill L."/>
            <person name="Bason N."/>
            <person name="Farbrother P."/>
            <person name="Desany B."/>
            <person name="Just E."/>
            <person name="Morio T."/>
            <person name="Rost R."/>
            <person name="Churcher C.M."/>
            <person name="Cooper J."/>
            <person name="Haydock S."/>
            <person name="van Driessche N."/>
            <person name="Cronin A."/>
            <person name="Goodhead I."/>
            <person name="Muzny D.M."/>
            <person name="Mourier T."/>
            <person name="Pain A."/>
            <person name="Lu M."/>
            <person name="Harper D."/>
            <person name="Lindsay R."/>
            <person name="Hauser H."/>
            <person name="James K.D."/>
            <person name="Quiles M."/>
            <person name="Madan Babu M."/>
            <person name="Saito T."/>
            <person name="Buchrieser C."/>
            <person name="Wardroper A."/>
            <person name="Felder M."/>
            <person name="Thangavelu M."/>
            <person name="Johnson D."/>
            <person name="Knights A."/>
            <person name="Loulseged H."/>
            <person name="Mungall K.L."/>
            <person name="Oliver K."/>
            <person name="Price C."/>
            <person name="Quail M.A."/>
            <person name="Urushihara H."/>
            <person name="Hernandez J."/>
            <person name="Rabbinowitsch E."/>
            <person name="Steffen D."/>
            <person name="Sanders M."/>
            <person name="Ma J."/>
            <person name="Kohara Y."/>
            <person name="Sharp S."/>
            <person name="Simmonds M.N."/>
            <person name="Spiegler S."/>
            <person name="Tivey A."/>
            <person name="Sugano S."/>
            <person name="White B."/>
            <person name="Walker D."/>
            <person name="Woodward J.R."/>
            <person name="Winckler T."/>
            <person name="Tanaka Y."/>
            <person name="Shaulsky G."/>
            <person name="Schleicher M."/>
            <person name="Weinstock G.M."/>
            <person name="Rosenthal A."/>
            <person name="Cox E.C."/>
            <person name="Chisholm R.L."/>
            <person name="Gibbs R.A."/>
            <person name="Loomis W.F."/>
            <person name="Platzer M."/>
            <person name="Kay R.R."/>
            <person name="Williams J.G."/>
            <person name="Dear P.H."/>
            <person name="Noegel A.A."/>
            <person name="Barrell B.G."/>
            <person name="Kuspa A."/>
        </authorList>
    </citation>
    <scope>NUCLEOTIDE SEQUENCE [LARGE SCALE GENOMIC DNA]</scope>
    <source>
        <strain>AX4</strain>
    </source>
</reference>
<accession>Q54PM6</accession>